<organism>
    <name type="scientific">Anaeromyxobacter sp. (strain K)</name>
    <dbReference type="NCBI Taxonomy" id="447217"/>
    <lineage>
        <taxon>Bacteria</taxon>
        <taxon>Pseudomonadati</taxon>
        <taxon>Myxococcota</taxon>
        <taxon>Myxococcia</taxon>
        <taxon>Myxococcales</taxon>
        <taxon>Cystobacterineae</taxon>
        <taxon>Anaeromyxobacteraceae</taxon>
        <taxon>Anaeromyxobacter</taxon>
    </lineage>
</organism>
<comment type="function">
    <text evidence="1">One of the primary rRNA binding proteins, it binds directly near the 3'-end of the 23S rRNA, where it nucleates assembly of the 50S subunit.</text>
</comment>
<comment type="subunit">
    <text evidence="1">Part of the 50S ribosomal subunit. Forms a cluster with proteins L14 and L19.</text>
</comment>
<comment type="similarity">
    <text evidence="1">Belongs to the universal ribosomal protein uL3 family.</text>
</comment>
<protein>
    <recommendedName>
        <fullName evidence="1">Large ribosomal subunit protein uL3</fullName>
    </recommendedName>
    <alternativeName>
        <fullName evidence="2">50S ribosomal protein L3</fullName>
    </alternativeName>
</protein>
<proteinExistence type="inferred from homology"/>
<accession>B4UAM2</accession>
<name>RL3_ANASK</name>
<keyword id="KW-0687">Ribonucleoprotein</keyword>
<keyword id="KW-0689">Ribosomal protein</keyword>
<keyword id="KW-0694">RNA-binding</keyword>
<keyword id="KW-0699">rRNA-binding</keyword>
<feature type="chain" id="PRO_1000141820" description="Large ribosomal subunit protein uL3">
    <location>
        <begin position="1"/>
        <end position="236"/>
    </location>
</feature>
<dbReference type="EMBL" id="CP001131">
    <property type="protein sequence ID" value="ACG73118.1"/>
    <property type="molecule type" value="Genomic_DNA"/>
</dbReference>
<dbReference type="RefSeq" id="WP_012525932.1">
    <property type="nucleotide sequence ID" value="NC_011145.1"/>
</dbReference>
<dbReference type="SMR" id="B4UAM2"/>
<dbReference type="KEGG" id="ank:AnaeK_1890"/>
<dbReference type="HOGENOM" id="CLU_044142_4_1_7"/>
<dbReference type="OrthoDB" id="9806135at2"/>
<dbReference type="Proteomes" id="UP000001871">
    <property type="component" value="Chromosome"/>
</dbReference>
<dbReference type="GO" id="GO:0022625">
    <property type="term" value="C:cytosolic large ribosomal subunit"/>
    <property type="evidence" value="ECO:0007669"/>
    <property type="project" value="TreeGrafter"/>
</dbReference>
<dbReference type="GO" id="GO:0019843">
    <property type="term" value="F:rRNA binding"/>
    <property type="evidence" value="ECO:0007669"/>
    <property type="project" value="UniProtKB-UniRule"/>
</dbReference>
<dbReference type="GO" id="GO:0003735">
    <property type="term" value="F:structural constituent of ribosome"/>
    <property type="evidence" value="ECO:0007669"/>
    <property type="project" value="InterPro"/>
</dbReference>
<dbReference type="GO" id="GO:0006412">
    <property type="term" value="P:translation"/>
    <property type="evidence" value="ECO:0007669"/>
    <property type="project" value="UniProtKB-UniRule"/>
</dbReference>
<dbReference type="FunFam" id="2.40.30.10:FF:000004">
    <property type="entry name" value="50S ribosomal protein L3"/>
    <property type="match status" value="1"/>
</dbReference>
<dbReference type="FunFam" id="3.30.160.810:FF:000001">
    <property type="entry name" value="50S ribosomal protein L3"/>
    <property type="match status" value="1"/>
</dbReference>
<dbReference type="Gene3D" id="3.30.160.810">
    <property type="match status" value="1"/>
</dbReference>
<dbReference type="Gene3D" id="2.40.30.10">
    <property type="entry name" value="Translation factors"/>
    <property type="match status" value="1"/>
</dbReference>
<dbReference type="HAMAP" id="MF_01325_B">
    <property type="entry name" value="Ribosomal_uL3_B"/>
    <property type="match status" value="1"/>
</dbReference>
<dbReference type="InterPro" id="IPR000597">
    <property type="entry name" value="Ribosomal_uL3"/>
</dbReference>
<dbReference type="InterPro" id="IPR019927">
    <property type="entry name" value="Ribosomal_uL3_bac/org-type"/>
</dbReference>
<dbReference type="InterPro" id="IPR019926">
    <property type="entry name" value="Ribosomal_uL3_CS"/>
</dbReference>
<dbReference type="InterPro" id="IPR009000">
    <property type="entry name" value="Transl_B-barrel_sf"/>
</dbReference>
<dbReference type="NCBIfam" id="TIGR03625">
    <property type="entry name" value="L3_bact"/>
    <property type="match status" value="1"/>
</dbReference>
<dbReference type="PANTHER" id="PTHR11229">
    <property type="entry name" value="50S RIBOSOMAL PROTEIN L3"/>
    <property type="match status" value="1"/>
</dbReference>
<dbReference type="PANTHER" id="PTHR11229:SF16">
    <property type="entry name" value="LARGE RIBOSOMAL SUBUNIT PROTEIN UL3C"/>
    <property type="match status" value="1"/>
</dbReference>
<dbReference type="Pfam" id="PF00297">
    <property type="entry name" value="Ribosomal_L3"/>
    <property type="match status" value="1"/>
</dbReference>
<dbReference type="SUPFAM" id="SSF50447">
    <property type="entry name" value="Translation proteins"/>
    <property type="match status" value="1"/>
</dbReference>
<dbReference type="PROSITE" id="PS00474">
    <property type="entry name" value="RIBOSOMAL_L3"/>
    <property type="match status" value="1"/>
</dbReference>
<evidence type="ECO:0000255" key="1">
    <source>
        <dbReference type="HAMAP-Rule" id="MF_01325"/>
    </source>
</evidence>
<evidence type="ECO:0000305" key="2"/>
<reference key="1">
    <citation type="submission" date="2008-08" db="EMBL/GenBank/DDBJ databases">
        <title>Complete sequence of Anaeromyxobacter sp. K.</title>
        <authorList>
            <consortium name="US DOE Joint Genome Institute"/>
            <person name="Lucas S."/>
            <person name="Copeland A."/>
            <person name="Lapidus A."/>
            <person name="Glavina del Rio T."/>
            <person name="Dalin E."/>
            <person name="Tice H."/>
            <person name="Bruce D."/>
            <person name="Goodwin L."/>
            <person name="Pitluck S."/>
            <person name="Saunders E."/>
            <person name="Brettin T."/>
            <person name="Detter J.C."/>
            <person name="Han C."/>
            <person name="Larimer F."/>
            <person name="Land M."/>
            <person name="Hauser L."/>
            <person name="Kyrpides N."/>
            <person name="Ovchinnikiva G."/>
            <person name="Beliaev A."/>
        </authorList>
    </citation>
    <scope>NUCLEOTIDE SEQUENCE [LARGE SCALE GENOMIC DNA]</scope>
    <source>
        <strain>K</strain>
    </source>
</reference>
<gene>
    <name evidence="1" type="primary">rplC</name>
    <name type="ordered locus">AnaeK_1890</name>
</gene>
<sequence length="236" mass="25555">MSTGLLAKKVGMTQIFTPEGDCVPVTVLEAGPCTVVRRKTAEKDGYDAVVIGFGVVDEKHAHRLSKPEVGVFKKAGTPIFRHVKEIRVKDAKQLGDLKAGDVLTVDKVFKANQRIDVAGVTKGRGFTGVMKRWNMKGAARDSSTAHEHHRHVGAIGQRKTPGKVWKGKHLPGHYGVDNVTIQNLTVVGIEAEQNVLLVSGAVPGHADGLLFVNTAAKGQPRIKQKQEVRERAKPKV</sequence>